<proteinExistence type="inferred from homology"/>
<accession>Q1C735</accession>
<protein>
    <recommendedName>
        <fullName evidence="1">Integration host factor subunit alpha</fullName>
        <shortName evidence="1">IHF-alpha</shortName>
    </recommendedName>
</protein>
<dbReference type="EMBL" id="CP000308">
    <property type="protein sequence ID" value="ABG13737.1"/>
    <property type="molecule type" value="Genomic_DNA"/>
</dbReference>
<dbReference type="RefSeq" id="WP_002211830.1">
    <property type="nucleotide sequence ID" value="NZ_CP009906.1"/>
</dbReference>
<dbReference type="SMR" id="Q1C735"/>
<dbReference type="GeneID" id="97456078"/>
<dbReference type="KEGG" id="ypa:YPA_1771"/>
<dbReference type="Proteomes" id="UP000001971">
    <property type="component" value="Chromosome"/>
</dbReference>
<dbReference type="GO" id="GO:0005829">
    <property type="term" value="C:cytosol"/>
    <property type="evidence" value="ECO:0007669"/>
    <property type="project" value="TreeGrafter"/>
</dbReference>
<dbReference type="GO" id="GO:0003677">
    <property type="term" value="F:DNA binding"/>
    <property type="evidence" value="ECO:0007669"/>
    <property type="project" value="UniProtKB-UniRule"/>
</dbReference>
<dbReference type="GO" id="GO:0030527">
    <property type="term" value="F:structural constituent of chromatin"/>
    <property type="evidence" value="ECO:0007669"/>
    <property type="project" value="InterPro"/>
</dbReference>
<dbReference type="GO" id="GO:0006310">
    <property type="term" value="P:DNA recombination"/>
    <property type="evidence" value="ECO:0007669"/>
    <property type="project" value="UniProtKB-UniRule"/>
</dbReference>
<dbReference type="GO" id="GO:0009893">
    <property type="term" value="P:positive regulation of metabolic process"/>
    <property type="evidence" value="ECO:0007669"/>
    <property type="project" value="UniProtKB-ARBA"/>
</dbReference>
<dbReference type="GO" id="GO:0006355">
    <property type="term" value="P:regulation of DNA-templated transcription"/>
    <property type="evidence" value="ECO:0007669"/>
    <property type="project" value="UniProtKB-UniRule"/>
</dbReference>
<dbReference type="GO" id="GO:0006417">
    <property type="term" value="P:regulation of translation"/>
    <property type="evidence" value="ECO:0007669"/>
    <property type="project" value="UniProtKB-UniRule"/>
</dbReference>
<dbReference type="CDD" id="cd13835">
    <property type="entry name" value="IHF_A"/>
    <property type="match status" value="1"/>
</dbReference>
<dbReference type="FunFam" id="4.10.520.10:FF:000002">
    <property type="entry name" value="Integration host factor subunit alpha"/>
    <property type="match status" value="1"/>
</dbReference>
<dbReference type="Gene3D" id="4.10.520.10">
    <property type="entry name" value="IHF-like DNA-binding proteins"/>
    <property type="match status" value="1"/>
</dbReference>
<dbReference type="HAMAP" id="MF_00380">
    <property type="entry name" value="IHF_alpha"/>
    <property type="match status" value="1"/>
</dbReference>
<dbReference type="InterPro" id="IPR000119">
    <property type="entry name" value="Hist_DNA-bd"/>
</dbReference>
<dbReference type="InterPro" id="IPR020816">
    <property type="entry name" value="Histone-like_DNA-bd_CS"/>
</dbReference>
<dbReference type="InterPro" id="IPR010992">
    <property type="entry name" value="IHF-like_DNA-bd_dom_sf"/>
</dbReference>
<dbReference type="InterPro" id="IPR005684">
    <property type="entry name" value="IHF_alpha"/>
</dbReference>
<dbReference type="NCBIfam" id="TIGR00987">
    <property type="entry name" value="himA"/>
    <property type="match status" value="1"/>
</dbReference>
<dbReference type="NCBIfam" id="NF001401">
    <property type="entry name" value="PRK00285.1"/>
    <property type="match status" value="1"/>
</dbReference>
<dbReference type="PANTHER" id="PTHR33175">
    <property type="entry name" value="DNA-BINDING PROTEIN HU"/>
    <property type="match status" value="1"/>
</dbReference>
<dbReference type="PANTHER" id="PTHR33175:SF2">
    <property type="entry name" value="INTEGRATION HOST FACTOR SUBUNIT ALPHA"/>
    <property type="match status" value="1"/>
</dbReference>
<dbReference type="Pfam" id="PF00216">
    <property type="entry name" value="Bac_DNA_binding"/>
    <property type="match status" value="1"/>
</dbReference>
<dbReference type="PRINTS" id="PR01727">
    <property type="entry name" value="DNABINDINGHU"/>
</dbReference>
<dbReference type="SMART" id="SM00411">
    <property type="entry name" value="BHL"/>
    <property type="match status" value="1"/>
</dbReference>
<dbReference type="SUPFAM" id="SSF47729">
    <property type="entry name" value="IHF-like DNA-binding proteins"/>
    <property type="match status" value="1"/>
</dbReference>
<dbReference type="PROSITE" id="PS00045">
    <property type="entry name" value="HISTONE_LIKE"/>
    <property type="match status" value="1"/>
</dbReference>
<name>IHFA_YERPA</name>
<comment type="function">
    <text evidence="1">This protein is one of the two subunits of integration host factor, a specific DNA-binding protein that functions in genetic recombination as well as in transcriptional and translational control.</text>
</comment>
<comment type="subunit">
    <text evidence="1">Heterodimer of an alpha and a beta chain.</text>
</comment>
<comment type="similarity">
    <text evidence="1">Belongs to the bacterial histone-like protein family.</text>
</comment>
<keyword id="KW-0233">DNA recombination</keyword>
<keyword id="KW-0238">DNA-binding</keyword>
<keyword id="KW-0804">Transcription</keyword>
<keyword id="KW-0805">Transcription regulation</keyword>
<keyword id="KW-0810">Translation regulation</keyword>
<reference key="1">
    <citation type="journal article" date="2006" name="J. Bacteriol.">
        <title>Complete genome sequence of Yersinia pestis strains Antiqua and Nepal516: evidence of gene reduction in an emerging pathogen.</title>
        <authorList>
            <person name="Chain P.S.G."/>
            <person name="Hu P."/>
            <person name="Malfatti S.A."/>
            <person name="Radnedge L."/>
            <person name="Larimer F."/>
            <person name="Vergez L.M."/>
            <person name="Worsham P."/>
            <person name="Chu M.C."/>
            <person name="Andersen G.L."/>
        </authorList>
    </citation>
    <scope>NUCLEOTIDE SEQUENCE [LARGE SCALE GENOMIC DNA]</scope>
    <source>
        <strain>Antiqua</strain>
    </source>
</reference>
<organism>
    <name type="scientific">Yersinia pestis bv. Antiqua (strain Antiqua)</name>
    <dbReference type="NCBI Taxonomy" id="360102"/>
    <lineage>
        <taxon>Bacteria</taxon>
        <taxon>Pseudomonadati</taxon>
        <taxon>Pseudomonadota</taxon>
        <taxon>Gammaproteobacteria</taxon>
        <taxon>Enterobacterales</taxon>
        <taxon>Yersiniaceae</taxon>
        <taxon>Yersinia</taxon>
    </lineage>
</organism>
<evidence type="ECO:0000255" key="1">
    <source>
        <dbReference type="HAMAP-Rule" id="MF_00380"/>
    </source>
</evidence>
<evidence type="ECO:0000256" key="2">
    <source>
        <dbReference type="SAM" id="MobiDB-lite"/>
    </source>
</evidence>
<feature type="chain" id="PRO_0000277792" description="Integration host factor subunit alpha">
    <location>
        <begin position="1"/>
        <end position="98"/>
    </location>
</feature>
<feature type="region of interest" description="Disordered" evidence="2">
    <location>
        <begin position="49"/>
        <end position="70"/>
    </location>
</feature>
<gene>
    <name evidence="1" type="primary">ihfA</name>
    <name evidence="1" type="synonym">himA</name>
    <name type="ordered locus">YPA_1771</name>
</gene>
<sequence>MALTKAEMSEHLFEKLGLSKRDAKDLVELFFEEVRRALENGEQVKLSGFGNFDLRDKNQRPGRNPKTGEDIPITARRVVTFRPGQKLKSRVESATPKE</sequence>